<reference key="1">
    <citation type="journal article" date="2004" name="Proc. Natl. Acad. Sci. U.S.A.">
        <title>Structural flexibility in the Burkholderia mallei genome.</title>
        <authorList>
            <person name="Nierman W.C."/>
            <person name="DeShazer D."/>
            <person name="Kim H.S."/>
            <person name="Tettelin H."/>
            <person name="Nelson K.E."/>
            <person name="Feldblyum T.V."/>
            <person name="Ulrich R.L."/>
            <person name="Ronning C.M."/>
            <person name="Brinkac L.M."/>
            <person name="Daugherty S.C."/>
            <person name="Davidsen T.D."/>
            <person name="DeBoy R.T."/>
            <person name="Dimitrov G."/>
            <person name="Dodson R.J."/>
            <person name="Durkin A.S."/>
            <person name="Gwinn M.L."/>
            <person name="Haft D.H."/>
            <person name="Khouri H.M."/>
            <person name="Kolonay J.F."/>
            <person name="Madupu R."/>
            <person name="Mohammoud Y."/>
            <person name="Nelson W.C."/>
            <person name="Radune D."/>
            <person name="Romero C.M."/>
            <person name="Sarria S."/>
            <person name="Selengut J."/>
            <person name="Shamblin C."/>
            <person name="Sullivan S.A."/>
            <person name="White O."/>
            <person name="Yu Y."/>
            <person name="Zafar N."/>
            <person name="Zhou L."/>
            <person name="Fraser C.M."/>
        </authorList>
    </citation>
    <scope>NUCLEOTIDE SEQUENCE [LARGE SCALE GENOMIC DNA]</scope>
    <source>
        <strain>ATCC 23344</strain>
    </source>
</reference>
<comment type="function">
    <text evidence="1">Nucleoside triphosphate pyrophosphatase that hydrolyzes dTTP and UTP. May have a dual role in cell division arrest and in preventing the incorporation of modified nucleotides into cellular nucleic acids.</text>
</comment>
<comment type="catalytic activity">
    <reaction evidence="1">
        <text>dTTP + H2O = dTMP + diphosphate + H(+)</text>
        <dbReference type="Rhea" id="RHEA:28534"/>
        <dbReference type="ChEBI" id="CHEBI:15377"/>
        <dbReference type="ChEBI" id="CHEBI:15378"/>
        <dbReference type="ChEBI" id="CHEBI:33019"/>
        <dbReference type="ChEBI" id="CHEBI:37568"/>
        <dbReference type="ChEBI" id="CHEBI:63528"/>
        <dbReference type="EC" id="3.6.1.9"/>
    </reaction>
</comment>
<comment type="catalytic activity">
    <reaction evidence="1">
        <text>UTP + H2O = UMP + diphosphate + H(+)</text>
        <dbReference type="Rhea" id="RHEA:29395"/>
        <dbReference type="ChEBI" id="CHEBI:15377"/>
        <dbReference type="ChEBI" id="CHEBI:15378"/>
        <dbReference type="ChEBI" id="CHEBI:33019"/>
        <dbReference type="ChEBI" id="CHEBI:46398"/>
        <dbReference type="ChEBI" id="CHEBI:57865"/>
        <dbReference type="EC" id="3.6.1.9"/>
    </reaction>
</comment>
<comment type="cofactor">
    <cofactor evidence="1">
        <name>a divalent metal cation</name>
        <dbReference type="ChEBI" id="CHEBI:60240"/>
    </cofactor>
</comment>
<comment type="subcellular location">
    <subcellularLocation>
        <location evidence="1">Cytoplasm</location>
    </subcellularLocation>
</comment>
<comment type="similarity">
    <text evidence="1">Belongs to the Maf family. YhdE subfamily.</text>
</comment>
<proteinExistence type="inferred from homology"/>
<sequence>MPEHAAPSYPFVYLASQSPRRRELLDQLGVRYELLAPAPDEDAEALEAELPGEAPDHYVLRVCVAKAQAARARLVARGLPAAPVLVADTTVTIDGAILGKPADAADALAMLARLAGRTHDVLTALAVIDATGELMPPALSRSAVRFAPAAREALARYVETGEPFGKAGAYAIQGRAAEFVERIDGSHSGIMGLPLFETAALLRAAHVAF</sequence>
<protein>
    <recommendedName>
        <fullName evidence="1">dTTP/UTP pyrophosphatase</fullName>
        <shortName evidence="1">dTTPase/UTPase</shortName>
        <ecNumber evidence="1">3.6.1.9</ecNumber>
    </recommendedName>
    <alternativeName>
        <fullName evidence="1">Nucleoside triphosphate pyrophosphatase</fullName>
    </alternativeName>
    <alternativeName>
        <fullName evidence="1">Nucleotide pyrophosphatase</fullName>
        <shortName evidence="1">Nucleotide PPase</shortName>
    </alternativeName>
</protein>
<feature type="chain" id="PRO_0000267266" description="dTTP/UTP pyrophosphatase">
    <location>
        <begin position="1"/>
        <end position="209"/>
    </location>
</feature>
<feature type="active site" description="Proton acceptor" evidence="1">
    <location>
        <position position="88"/>
    </location>
</feature>
<feature type="site" description="Important for substrate specificity" evidence="1">
    <location>
        <position position="20"/>
    </location>
</feature>
<feature type="site" description="Important for substrate specificity" evidence="1">
    <location>
        <position position="89"/>
    </location>
</feature>
<feature type="site" description="Important for substrate specificity" evidence="1">
    <location>
        <position position="173"/>
    </location>
</feature>
<organism>
    <name type="scientific">Burkholderia mallei (strain ATCC 23344)</name>
    <dbReference type="NCBI Taxonomy" id="243160"/>
    <lineage>
        <taxon>Bacteria</taxon>
        <taxon>Pseudomonadati</taxon>
        <taxon>Pseudomonadota</taxon>
        <taxon>Betaproteobacteria</taxon>
        <taxon>Burkholderiales</taxon>
        <taxon>Burkholderiaceae</taxon>
        <taxon>Burkholderia</taxon>
        <taxon>pseudomallei group</taxon>
    </lineage>
</organism>
<name>NTPPA_BURMA</name>
<gene>
    <name type="ordered locus">BMA1890</name>
</gene>
<dbReference type="EC" id="3.6.1.9" evidence="1"/>
<dbReference type="EMBL" id="CP000010">
    <property type="protein sequence ID" value="AAU49465.1"/>
    <property type="molecule type" value="Genomic_DNA"/>
</dbReference>
<dbReference type="RefSeq" id="WP_004185695.1">
    <property type="nucleotide sequence ID" value="NC_006348.1"/>
</dbReference>
<dbReference type="RefSeq" id="YP_103486.1">
    <property type="nucleotide sequence ID" value="NC_006348.1"/>
</dbReference>
<dbReference type="SMR" id="Q62II4"/>
<dbReference type="KEGG" id="bma:BMA1890"/>
<dbReference type="PATRIC" id="fig|243160.12.peg.1932"/>
<dbReference type="eggNOG" id="COG0424">
    <property type="taxonomic scope" value="Bacteria"/>
</dbReference>
<dbReference type="HOGENOM" id="CLU_040416_2_1_4"/>
<dbReference type="Proteomes" id="UP000006693">
    <property type="component" value="Chromosome 1"/>
</dbReference>
<dbReference type="GO" id="GO:0005737">
    <property type="term" value="C:cytoplasm"/>
    <property type="evidence" value="ECO:0007669"/>
    <property type="project" value="UniProtKB-SubCell"/>
</dbReference>
<dbReference type="GO" id="GO:0036218">
    <property type="term" value="F:dTTP diphosphatase activity"/>
    <property type="evidence" value="ECO:0007669"/>
    <property type="project" value="RHEA"/>
</dbReference>
<dbReference type="GO" id="GO:0036221">
    <property type="term" value="F:UTP diphosphatase activity"/>
    <property type="evidence" value="ECO:0007669"/>
    <property type="project" value="RHEA"/>
</dbReference>
<dbReference type="GO" id="GO:0009117">
    <property type="term" value="P:nucleotide metabolic process"/>
    <property type="evidence" value="ECO:0007669"/>
    <property type="project" value="UniProtKB-KW"/>
</dbReference>
<dbReference type="CDD" id="cd00555">
    <property type="entry name" value="Maf"/>
    <property type="match status" value="1"/>
</dbReference>
<dbReference type="Gene3D" id="3.90.950.10">
    <property type="match status" value="1"/>
</dbReference>
<dbReference type="HAMAP" id="MF_00528">
    <property type="entry name" value="Maf"/>
    <property type="match status" value="1"/>
</dbReference>
<dbReference type="InterPro" id="IPR029001">
    <property type="entry name" value="ITPase-like_fam"/>
</dbReference>
<dbReference type="InterPro" id="IPR003697">
    <property type="entry name" value="Maf-like"/>
</dbReference>
<dbReference type="NCBIfam" id="TIGR00172">
    <property type="entry name" value="maf"/>
    <property type="match status" value="1"/>
</dbReference>
<dbReference type="PANTHER" id="PTHR43213">
    <property type="entry name" value="BIFUNCTIONAL DTTP/UTP PYROPHOSPHATASE/METHYLTRANSFERASE PROTEIN-RELATED"/>
    <property type="match status" value="1"/>
</dbReference>
<dbReference type="PANTHER" id="PTHR43213:SF5">
    <property type="entry name" value="BIFUNCTIONAL DTTP_UTP PYROPHOSPHATASE_METHYLTRANSFERASE PROTEIN-RELATED"/>
    <property type="match status" value="1"/>
</dbReference>
<dbReference type="Pfam" id="PF02545">
    <property type="entry name" value="Maf"/>
    <property type="match status" value="1"/>
</dbReference>
<dbReference type="PIRSF" id="PIRSF006305">
    <property type="entry name" value="Maf"/>
    <property type="match status" value="1"/>
</dbReference>
<dbReference type="SUPFAM" id="SSF52972">
    <property type="entry name" value="ITPase-like"/>
    <property type="match status" value="1"/>
</dbReference>
<keyword id="KW-0963">Cytoplasm</keyword>
<keyword id="KW-0378">Hydrolase</keyword>
<keyword id="KW-0546">Nucleotide metabolism</keyword>
<keyword id="KW-1185">Reference proteome</keyword>
<accession>Q62II4</accession>
<evidence type="ECO:0000255" key="1">
    <source>
        <dbReference type="HAMAP-Rule" id="MF_00528"/>
    </source>
</evidence>